<name>CSRA_ECODH</name>
<sequence length="61" mass="6856">MLILTRRVGETLMIGDEVTVTVLGVKGNQVRIGVNAPKEVSVHREEIYQRIQAEKSQQSSY</sequence>
<organism>
    <name type="scientific">Escherichia coli (strain K12 / DH10B)</name>
    <dbReference type="NCBI Taxonomy" id="316385"/>
    <lineage>
        <taxon>Bacteria</taxon>
        <taxon>Pseudomonadati</taxon>
        <taxon>Pseudomonadota</taxon>
        <taxon>Gammaproteobacteria</taxon>
        <taxon>Enterobacterales</taxon>
        <taxon>Enterobacteriaceae</taxon>
        <taxon>Escherichia</taxon>
    </lineage>
</organism>
<keyword id="KW-0010">Activator</keyword>
<keyword id="KW-0963">Cytoplasm</keyword>
<keyword id="KW-0678">Repressor</keyword>
<keyword id="KW-0694">RNA-binding</keyword>
<keyword id="KW-0810">Translation regulation</keyword>
<evidence type="ECO:0000255" key="1">
    <source>
        <dbReference type="HAMAP-Rule" id="MF_00167"/>
    </source>
</evidence>
<gene>
    <name evidence="1" type="primary">csrA</name>
    <name type="ordered locus">ECDH10B_2864</name>
</gene>
<feature type="chain" id="PRO_1000097489" description="Translational regulator CsrA">
    <location>
        <begin position="1"/>
        <end position="61"/>
    </location>
</feature>
<proteinExistence type="inferred from homology"/>
<accession>B1XCM4</accession>
<dbReference type="EMBL" id="CP000948">
    <property type="protein sequence ID" value="ACB03815.1"/>
    <property type="molecule type" value="Genomic_DNA"/>
</dbReference>
<dbReference type="RefSeq" id="WP_000906486.1">
    <property type="nucleotide sequence ID" value="NC_010473.1"/>
</dbReference>
<dbReference type="SMR" id="B1XCM4"/>
<dbReference type="GeneID" id="98389839"/>
<dbReference type="KEGG" id="ecd:ECDH10B_2864"/>
<dbReference type="HOGENOM" id="CLU_164837_2_1_6"/>
<dbReference type="GO" id="GO:0005829">
    <property type="term" value="C:cytosol"/>
    <property type="evidence" value="ECO:0007669"/>
    <property type="project" value="TreeGrafter"/>
</dbReference>
<dbReference type="GO" id="GO:0048027">
    <property type="term" value="F:mRNA 5'-UTR binding"/>
    <property type="evidence" value="ECO:0007669"/>
    <property type="project" value="UniProtKB-UniRule"/>
</dbReference>
<dbReference type="GO" id="GO:0006402">
    <property type="term" value="P:mRNA catabolic process"/>
    <property type="evidence" value="ECO:0007669"/>
    <property type="project" value="InterPro"/>
</dbReference>
<dbReference type="GO" id="GO:0045947">
    <property type="term" value="P:negative regulation of translational initiation"/>
    <property type="evidence" value="ECO:0007669"/>
    <property type="project" value="UniProtKB-UniRule"/>
</dbReference>
<dbReference type="GO" id="GO:0045948">
    <property type="term" value="P:positive regulation of translational initiation"/>
    <property type="evidence" value="ECO:0007669"/>
    <property type="project" value="UniProtKB-UniRule"/>
</dbReference>
<dbReference type="GO" id="GO:0006109">
    <property type="term" value="P:regulation of carbohydrate metabolic process"/>
    <property type="evidence" value="ECO:0007669"/>
    <property type="project" value="UniProtKB-UniRule"/>
</dbReference>
<dbReference type="FunFam" id="2.60.40.4380:FF:000001">
    <property type="entry name" value="Translational regulator CsrA"/>
    <property type="match status" value="1"/>
</dbReference>
<dbReference type="Gene3D" id="2.60.40.4380">
    <property type="entry name" value="Translational regulator CsrA"/>
    <property type="match status" value="1"/>
</dbReference>
<dbReference type="HAMAP" id="MF_00167">
    <property type="entry name" value="CsrA"/>
    <property type="match status" value="1"/>
</dbReference>
<dbReference type="InterPro" id="IPR003751">
    <property type="entry name" value="CsrA"/>
</dbReference>
<dbReference type="InterPro" id="IPR036107">
    <property type="entry name" value="CsrA_sf"/>
</dbReference>
<dbReference type="NCBIfam" id="TIGR00202">
    <property type="entry name" value="csrA"/>
    <property type="match status" value="1"/>
</dbReference>
<dbReference type="NCBIfam" id="NF002469">
    <property type="entry name" value="PRK01712.1"/>
    <property type="match status" value="1"/>
</dbReference>
<dbReference type="PANTHER" id="PTHR34984">
    <property type="entry name" value="CARBON STORAGE REGULATOR"/>
    <property type="match status" value="1"/>
</dbReference>
<dbReference type="PANTHER" id="PTHR34984:SF1">
    <property type="entry name" value="CARBON STORAGE REGULATOR"/>
    <property type="match status" value="1"/>
</dbReference>
<dbReference type="Pfam" id="PF02599">
    <property type="entry name" value="CsrA"/>
    <property type="match status" value="1"/>
</dbReference>
<dbReference type="SUPFAM" id="SSF117130">
    <property type="entry name" value="CsrA-like"/>
    <property type="match status" value="1"/>
</dbReference>
<comment type="function">
    <text evidence="1">A key translational regulator that binds mRNA to regulate translation initiation and/or mRNA stability. Mediates global changes in gene expression, shifting from rapid growth to stress survival by linking envelope stress, the stringent response and the catabolite repression systems. Usually binds in the 5'-UTR; binding at or near the Shine-Dalgarno sequence prevents ribosome-binding, repressing translation, binding elsewhere in the 5'-UTR can activate translation and/or stabilize the mRNA. Its function is antagonized by small RNA(s).</text>
</comment>
<comment type="subunit">
    <text evidence="1">Homodimer; the beta-strands of each monomer intercalate to form a hydrophobic core, while the alpha-helices form wings that extend away from the core.</text>
</comment>
<comment type="subcellular location">
    <subcellularLocation>
        <location evidence="1">Cytoplasm</location>
    </subcellularLocation>
</comment>
<comment type="similarity">
    <text evidence="1">Belongs to the CsrA/RsmA family.</text>
</comment>
<reference key="1">
    <citation type="journal article" date="2008" name="J. Bacteriol.">
        <title>The complete genome sequence of Escherichia coli DH10B: insights into the biology of a laboratory workhorse.</title>
        <authorList>
            <person name="Durfee T."/>
            <person name="Nelson R."/>
            <person name="Baldwin S."/>
            <person name="Plunkett G. III"/>
            <person name="Burland V."/>
            <person name="Mau B."/>
            <person name="Petrosino J.F."/>
            <person name="Qin X."/>
            <person name="Muzny D.M."/>
            <person name="Ayele M."/>
            <person name="Gibbs R.A."/>
            <person name="Csorgo B."/>
            <person name="Posfai G."/>
            <person name="Weinstock G.M."/>
            <person name="Blattner F.R."/>
        </authorList>
    </citation>
    <scope>NUCLEOTIDE SEQUENCE [LARGE SCALE GENOMIC DNA]</scope>
    <source>
        <strain>K12 / DH10B</strain>
    </source>
</reference>
<protein>
    <recommendedName>
        <fullName evidence="1">Translational regulator CsrA</fullName>
    </recommendedName>
    <alternativeName>
        <fullName evidence="1">Carbon storage regulator</fullName>
    </alternativeName>
</protein>